<dbReference type="EC" id="2.7.7.60" evidence="1"/>
<dbReference type="EC" id="4.6.1.12" evidence="1"/>
<dbReference type="EMBL" id="CR522870">
    <property type="protein sequence ID" value="CAG34986.1"/>
    <property type="status" value="ALT_INIT"/>
    <property type="molecule type" value="Genomic_DNA"/>
</dbReference>
<dbReference type="RefSeq" id="WP_041278170.1">
    <property type="nucleotide sequence ID" value="NC_006138.1"/>
</dbReference>
<dbReference type="SMR" id="Q6ARN9"/>
<dbReference type="STRING" id="177439.DP0257"/>
<dbReference type="KEGG" id="dps:DP0257"/>
<dbReference type="eggNOG" id="COG0245">
    <property type="taxonomic scope" value="Bacteria"/>
</dbReference>
<dbReference type="eggNOG" id="COG1211">
    <property type="taxonomic scope" value="Bacteria"/>
</dbReference>
<dbReference type="HOGENOM" id="CLU_042800_2_5_7"/>
<dbReference type="OrthoDB" id="9804336at2"/>
<dbReference type="UniPathway" id="UPA00056">
    <property type="reaction ID" value="UER00093"/>
</dbReference>
<dbReference type="UniPathway" id="UPA00056">
    <property type="reaction ID" value="UER00095"/>
</dbReference>
<dbReference type="Proteomes" id="UP000000602">
    <property type="component" value="Chromosome"/>
</dbReference>
<dbReference type="GO" id="GO:0008685">
    <property type="term" value="F:2-C-methyl-D-erythritol 2,4-cyclodiphosphate synthase activity"/>
    <property type="evidence" value="ECO:0007669"/>
    <property type="project" value="UniProtKB-UniRule"/>
</dbReference>
<dbReference type="GO" id="GO:0050518">
    <property type="term" value="F:2-C-methyl-D-erythritol 4-phosphate cytidylyltransferase activity"/>
    <property type="evidence" value="ECO:0007669"/>
    <property type="project" value="UniProtKB-UniRule"/>
</dbReference>
<dbReference type="GO" id="GO:0046872">
    <property type="term" value="F:metal ion binding"/>
    <property type="evidence" value="ECO:0007669"/>
    <property type="project" value="UniProtKB-KW"/>
</dbReference>
<dbReference type="GO" id="GO:0019288">
    <property type="term" value="P:isopentenyl diphosphate biosynthetic process, methylerythritol 4-phosphate pathway"/>
    <property type="evidence" value="ECO:0007669"/>
    <property type="project" value="UniProtKB-UniRule"/>
</dbReference>
<dbReference type="GO" id="GO:0016114">
    <property type="term" value="P:terpenoid biosynthetic process"/>
    <property type="evidence" value="ECO:0007669"/>
    <property type="project" value="InterPro"/>
</dbReference>
<dbReference type="CDD" id="cd02516">
    <property type="entry name" value="CDP-ME_synthetase"/>
    <property type="match status" value="1"/>
</dbReference>
<dbReference type="CDD" id="cd00554">
    <property type="entry name" value="MECDP_synthase"/>
    <property type="match status" value="1"/>
</dbReference>
<dbReference type="FunFam" id="3.30.1330.50:FF:000001">
    <property type="entry name" value="2-C-methyl-D-erythritol 2,4-cyclodiphosphate synthase"/>
    <property type="match status" value="1"/>
</dbReference>
<dbReference type="FunFam" id="3.90.550.10:FF:000003">
    <property type="entry name" value="2-C-methyl-D-erythritol 4-phosphate cytidylyltransferase"/>
    <property type="match status" value="1"/>
</dbReference>
<dbReference type="Gene3D" id="3.30.1330.50">
    <property type="entry name" value="2-C-methyl-D-erythritol 2,4-cyclodiphosphate synthase"/>
    <property type="match status" value="1"/>
</dbReference>
<dbReference type="Gene3D" id="3.90.550.10">
    <property type="entry name" value="Spore Coat Polysaccharide Biosynthesis Protein SpsA, Chain A"/>
    <property type="match status" value="1"/>
</dbReference>
<dbReference type="HAMAP" id="MF_00108">
    <property type="entry name" value="IspD"/>
    <property type="match status" value="1"/>
</dbReference>
<dbReference type="HAMAP" id="MF_01520">
    <property type="entry name" value="IspDF"/>
    <property type="match status" value="1"/>
</dbReference>
<dbReference type="HAMAP" id="MF_00107">
    <property type="entry name" value="IspF"/>
    <property type="match status" value="1"/>
</dbReference>
<dbReference type="InterPro" id="IPR001228">
    <property type="entry name" value="IspD"/>
</dbReference>
<dbReference type="InterPro" id="IPR026596">
    <property type="entry name" value="IspD/F"/>
</dbReference>
<dbReference type="InterPro" id="IPR034683">
    <property type="entry name" value="IspD/TarI"/>
</dbReference>
<dbReference type="InterPro" id="IPR050088">
    <property type="entry name" value="IspD/TarI_cytidylyltransf_bact"/>
</dbReference>
<dbReference type="InterPro" id="IPR018294">
    <property type="entry name" value="ISPD_synthase_CS"/>
</dbReference>
<dbReference type="InterPro" id="IPR003526">
    <property type="entry name" value="MECDP_synthase"/>
</dbReference>
<dbReference type="InterPro" id="IPR020555">
    <property type="entry name" value="MECDP_synthase_CS"/>
</dbReference>
<dbReference type="InterPro" id="IPR036571">
    <property type="entry name" value="MECDP_synthase_sf"/>
</dbReference>
<dbReference type="InterPro" id="IPR029044">
    <property type="entry name" value="Nucleotide-diphossugar_trans"/>
</dbReference>
<dbReference type="NCBIfam" id="TIGR00453">
    <property type="entry name" value="ispD"/>
    <property type="match status" value="1"/>
</dbReference>
<dbReference type="NCBIfam" id="TIGR00151">
    <property type="entry name" value="ispF"/>
    <property type="match status" value="1"/>
</dbReference>
<dbReference type="PANTHER" id="PTHR32125">
    <property type="entry name" value="2-C-METHYL-D-ERYTHRITOL 4-PHOSPHATE CYTIDYLYLTRANSFERASE, CHLOROPLASTIC"/>
    <property type="match status" value="1"/>
</dbReference>
<dbReference type="PANTHER" id="PTHR32125:SF4">
    <property type="entry name" value="2-C-METHYL-D-ERYTHRITOL 4-PHOSPHATE CYTIDYLYLTRANSFERASE, CHLOROPLASTIC"/>
    <property type="match status" value="1"/>
</dbReference>
<dbReference type="Pfam" id="PF01128">
    <property type="entry name" value="IspD"/>
    <property type="match status" value="1"/>
</dbReference>
<dbReference type="Pfam" id="PF02542">
    <property type="entry name" value="YgbB"/>
    <property type="match status" value="1"/>
</dbReference>
<dbReference type="SUPFAM" id="SSF69765">
    <property type="entry name" value="IpsF-like"/>
    <property type="match status" value="1"/>
</dbReference>
<dbReference type="SUPFAM" id="SSF53448">
    <property type="entry name" value="Nucleotide-diphospho-sugar transferases"/>
    <property type="match status" value="1"/>
</dbReference>
<dbReference type="PROSITE" id="PS01295">
    <property type="entry name" value="ISPD"/>
    <property type="match status" value="1"/>
</dbReference>
<dbReference type="PROSITE" id="PS01350">
    <property type="entry name" value="ISPF"/>
    <property type="match status" value="1"/>
</dbReference>
<feature type="chain" id="PRO_0000075665" description="Bifunctional enzyme IspD/IspF">
    <location>
        <begin position="1"/>
        <end position="386"/>
    </location>
</feature>
<feature type="region of interest" description="2-C-methyl-D-erythritol 4-phosphate cytidylyltransferase" evidence="1">
    <location>
        <begin position="1"/>
        <end position="231"/>
    </location>
</feature>
<feature type="region of interest" description="2-C-methyl-D-erythritol 2,4-cyclodiphosphate synthase" evidence="1">
    <location>
        <begin position="232"/>
        <end position="386"/>
    </location>
</feature>
<feature type="binding site" evidence="1">
    <location>
        <begin position="238"/>
        <end position="240"/>
    </location>
    <ligand>
        <name>4-CDP-2-C-methyl-D-erythritol 2-phosphate</name>
        <dbReference type="ChEBI" id="CHEBI:57919"/>
    </ligand>
</feature>
<feature type="binding site" evidence="1">
    <location>
        <position position="238"/>
    </location>
    <ligand>
        <name>a divalent metal cation</name>
        <dbReference type="ChEBI" id="CHEBI:60240"/>
    </ligand>
</feature>
<feature type="binding site" evidence="1">
    <location>
        <position position="240"/>
    </location>
    <ligand>
        <name>a divalent metal cation</name>
        <dbReference type="ChEBI" id="CHEBI:60240"/>
    </ligand>
</feature>
<feature type="binding site" evidence="1">
    <location>
        <begin position="264"/>
        <end position="265"/>
    </location>
    <ligand>
        <name>4-CDP-2-C-methyl-D-erythritol 2-phosphate</name>
        <dbReference type="ChEBI" id="CHEBI:57919"/>
    </ligand>
</feature>
<feature type="binding site" evidence="1">
    <location>
        <position position="272"/>
    </location>
    <ligand>
        <name>a divalent metal cation</name>
        <dbReference type="ChEBI" id="CHEBI:60240"/>
    </ligand>
</feature>
<feature type="binding site" evidence="1">
    <location>
        <begin position="286"/>
        <end position="288"/>
    </location>
    <ligand>
        <name>4-CDP-2-C-methyl-D-erythritol 2-phosphate</name>
        <dbReference type="ChEBI" id="CHEBI:57919"/>
    </ligand>
</feature>
<feature type="binding site" evidence="1">
    <location>
        <begin position="362"/>
        <end position="365"/>
    </location>
    <ligand>
        <name>4-CDP-2-C-methyl-D-erythritol 2-phosphate</name>
        <dbReference type="ChEBI" id="CHEBI:57919"/>
    </ligand>
</feature>
<feature type="binding site" evidence="1">
    <location>
        <position position="369"/>
    </location>
    <ligand>
        <name>4-CDP-2-C-methyl-D-erythritol 2-phosphate</name>
        <dbReference type="ChEBI" id="CHEBI:57919"/>
    </ligand>
</feature>
<feature type="binding site" evidence="1">
    <location>
        <position position="372"/>
    </location>
    <ligand>
        <name>4-CDP-2-C-methyl-D-erythritol 2-phosphate</name>
        <dbReference type="ChEBI" id="CHEBI:57919"/>
    </ligand>
</feature>
<feature type="site" description="Transition state stabilizer" evidence="1">
    <location>
        <position position="16"/>
    </location>
</feature>
<feature type="site" description="Transition state stabilizer" evidence="1">
    <location>
        <position position="23"/>
    </location>
</feature>
<feature type="site" description="Positions MEP for the nucleophilic attack" evidence="1">
    <location>
        <position position="153"/>
    </location>
</feature>
<feature type="site" description="Positions MEP for the nucleophilic attack" evidence="1">
    <location>
        <position position="207"/>
    </location>
</feature>
<feature type="site" description="Transition state stabilizer" evidence="1">
    <location>
        <position position="264"/>
    </location>
</feature>
<feature type="site" description="Transition state stabilizer" evidence="1">
    <location>
        <position position="363"/>
    </location>
</feature>
<proteinExistence type="inferred from homology"/>
<sequence>MKNGAVIIPAAGSGTRMKLDYPKQYHAVAGTPIIVHTIRAFNKHPCIAKIILVVPQDHLEESKALLQKYQLENISIVTGGARRQDSVLRGLQEVPESIDIVLVHDGARPMVSAELISRCYKGAQQYGAVIAAVPVKDTLKRGAGRIVTGTVDREGLWQAQTPQAARKALLVKAFKENGMRNVTDESTLLEGVGIPVTLIEGSETNIKITRPEDLILAENFLREKKEPMQKIRIGHGFDAHQLVEKRRLILGGVEIPYHLGLAGHSDADVLVHALCDALLGAIGAGDIGRHFPDSSDAFKDIYSIRLLESVMQKVGELNYKIGNADISVICQAPKLAPYLKQMQEIIATSCACQISDINIKATTTEKMGYTGRGEGISCHAVVLLQQ</sequence>
<reference key="1">
    <citation type="journal article" date="2004" name="Environ. Microbiol.">
        <title>The genome of Desulfotalea psychrophila, a sulfate-reducing bacterium from permanently cold Arctic sediments.</title>
        <authorList>
            <person name="Rabus R."/>
            <person name="Ruepp A."/>
            <person name="Frickey T."/>
            <person name="Rattei T."/>
            <person name="Fartmann B."/>
            <person name="Stark M."/>
            <person name="Bauer M."/>
            <person name="Zibat A."/>
            <person name="Lombardot T."/>
            <person name="Becker I."/>
            <person name="Amann J."/>
            <person name="Gellner K."/>
            <person name="Teeling H."/>
            <person name="Leuschner W.D."/>
            <person name="Gloeckner F.-O."/>
            <person name="Lupas A.N."/>
            <person name="Amann R."/>
            <person name="Klenk H.-P."/>
        </authorList>
    </citation>
    <scope>NUCLEOTIDE SEQUENCE [LARGE SCALE GENOMIC DNA]</scope>
    <source>
        <strain>DSM 12343 / LSv54</strain>
    </source>
</reference>
<protein>
    <recommendedName>
        <fullName evidence="1">Bifunctional enzyme IspD/IspF</fullName>
    </recommendedName>
    <domain>
        <recommendedName>
            <fullName evidence="1">2-C-methyl-D-erythritol 4-phosphate cytidylyltransferase</fullName>
            <ecNumber evidence="1">2.7.7.60</ecNumber>
        </recommendedName>
        <alternativeName>
            <fullName evidence="1">4-diphosphocytidyl-2C-methyl-D-erythritol synthase</fullName>
        </alternativeName>
        <alternativeName>
            <fullName evidence="1">MEP cytidylyltransferase</fullName>
            <shortName evidence="1">MCT</shortName>
        </alternativeName>
    </domain>
    <domain>
        <recommendedName>
            <fullName evidence="1">2-C-methyl-D-erythritol 2,4-cyclodiphosphate synthase</fullName>
            <shortName evidence="1">MECDP-synthase</shortName>
            <shortName evidence="1">MECPP-synthase</shortName>
            <shortName evidence="1">MECPS</shortName>
            <ecNumber evidence="1">4.6.1.12</ecNumber>
        </recommendedName>
    </domain>
</protein>
<keyword id="KW-0414">Isoprene biosynthesis</keyword>
<keyword id="KW-0456">Lyase</keyword>
<keyword id="KW-0479">Metal-binding</keyword>
<keyword id="KW-0511">Multifunctional enzyme</keyword>
<keyword id="KW-0548">Nucleotidyltransferase</keyword>
<keyword id="KW-1185">Reference proteome</keyword>
<keyword id="KW-0808">Transferase</keyword>
<name>ISPDF_DESPS</name>
<gene>
    <name evidence="1" type="primary">ispDF</name>
    <name type="ordered locus">DP0257</name>
</gene>
<evidence type="ECO:0000255" key="1">
    <source>
        <dbReference type="HAMAP-Rule" id="MF_01520"/>
    </source>
</evidence>
<evidence type="ECO:0000305" key="2"/>
<organism>
    <name type="scientific">Desulfotalea psychrophila (strain LSv54 / DSM 12343)</name>
    <dbReference type="NCBI Taxonomy" id="177439"/>
    <lineage>
        <taxon>Bacteria</taxon>
        <taxon>Pseudomonadati</taxon>
        <taxon>Thermodesulfobacteriota</taxon>
        <taxon>Desulfobulbia</taxon>
        <taxon>Desulfobulbales</taxon>
        <taxon>Desulfocapsaceae</taxon>
        <taxon>Desulfotalea</taxon>
    </lineage>
</organism>
<accession>Q6ARN9</accession>
<comment type="function">
    <text evidence="1">Bifunctional enzyme that catalyzes the formation of 4-diphosphocytidyl-2-C-methyl-D-erythritol from CTP and 2-C-methyl-D-erythritol 4-phosphate (MEP) (IspD), and catalyzes the conversion of 4-diphosphocytidyl-2-C-methyl-D-erythritol 2-phosphate (CDP-ME2P) to 2-C-methyl-D-erythritol 2,4-cyclodiphosphate (ME-CPP) with a corresponding release of cytidine 5-monophosphate (CMP) (IspF).</text>
</comment>
<comment type="catalytic activity">
    <reaction evidence="1">
        <text>2-C-methyl-D-erythritol 4-phosphate + CTP + H(+) = 4-CDP-2-C-methyl-D-erythritol + diphosphate</text>
        <dbReference type="Rhea" id="RHEA:13429"/>
        <dbReference type="ChEBI" id="CHEBI:15378"/>
        <dbReference type="ChEBI" id="CHEBI:33019"/>
        <dbReference type="ChEBI" id="CHEBI:37563"/>
        <dbReference type="ChEBI" id="CHEBI:57823"/>
        <dbReference type="ChEBI" id="CHEBI:58262"/>
        <dbReference type="EC" id="2.7.7.60"/>
    </reaction>
</comment>
<comment type="catalytic activity">
    <reaction evidence="1">
        <text>4-CDP-2-C-methyl-D-erythritol 2-phosphate = 2-C-methyl-D-erythritol 2,4-cyclic diphosphate + CMP</text>
        <dbReference type="Rhea" id="RHEA:23864"/>
        <dbReference type="ChEBI" id="CHEBI:57919"/>
        <dbReference type="ChEBI" id="CHEBI:58483"/>
        <dbReference type="ChEBI" id="CHEBI:60377"/>
        <dbReference type="EC" id="4.6.1.12"/>
    </reaction>
</comment>
<comment type="cofactor">
    <cofactor evidence="1">
        <name>a divalent metal cation</name>
        <dbReference type="ChEBI" id="CHEBI:60240"/>
    </cofactor>
</comment>
<comment type="pathway">
    <text evidence="1">Isoprenoid biosynthesis; isopentenyl diphosphate biosynthesis via DXP pathway; isopentenyl diphosphate from 1-deoxy-D-xylulose 5-phosphate: step 2/6.</text>
</comment>
<comment type="pathway">
    <text evidence="1">Isoprenoid biosynthesis; isopentenyl diphosphate biosynthesis via DXP pathway; isopentenyl diphosphate from 1-deoxy-D-xylulose 5-phosphate: step 4/6.</text>
</comment>
<comment type="similarity">
    <text evidence="1">In the N-terminal section; belongs to the IspD/TarI cytidylyltransferase family. IspD subfamily.</text>
</comment>
<comment type="similarity">
    <text evidence="1">In the C-terminal section; belongs to the IspF family.</text>
</comment>
<comment type="sequence caution" evidence="2">
    <conflict type="erroneous initiation">
        <sequence resource="EMBL-CDS" id="CAG34986"/>
    </conflict>
    <text>Truncated N-terminus.</text>
</comment>